<organism>
    <name type="scientific">Mycobacterium tuberculosis (strain ATCC 25618 / H37Rv)</name>
    <dbReference type="NCBI Taxonomy" id="83332"/>
    <lineage>
        <taxon>Bacteria</taxon>
        <taxon>Bacillati</taxon>
        <taxon>Actinomycetota</taxon>
        <taxon>Actinomycetes</taxon>
        <taxon>Mycobacteriales</taxon>
        <taxon>Mycobacteriaceae</taxon>
        <taxon>Mycobacterium</taxon>
        <taxon>Mycobacterium tuberculosis complex</taxon>
    </lineage>
</organism>
<proteinExistence type="evidence at protein level"/>
<sequence length="139" mass="14785">MPPAKKGPATSARKGQKTRRREKKNVPHGAAHIKSTFNNTIVTITDPQGNVIAWASSGHVGFKGSRKSTPFAAQLAAENAARKAQDHGVRKVDVFVKGPGSGRETAIRSLQAAGLEVGAISDVTPQPHNGVRPPKRRRV</sequence>
<evidence type="ECO:0000255" key="1">
    <source>
        <dbReference type="HAMAP-Rule" id="MF_01310"/>
    </source>
</evidence>
<evidence type="ECO:0000256" key="2">
    <source>
        <dbReference type="SAM" id="MobiDB-lite"/>
    </source>
</evidence>
<evidence type="ECO:0000305" key="3"/>
<feature type="chain" id="PRO_0000123185" description="Small ribosomal subunit protein uS11">
    <location>
        <begin position="1"/>
        <end position="139"/>
    </location>
</feature>
<feature type="region of interest" description="Disordered" evidence="2">
    <location>
        <begin position="1"/>
        <end position="33"/>
    </location>
</feature>
<feature type="region of interest" description="Disordered" evidence="2">
    <location>
        <begin position="118"/>
        <end position="139"/>
    </location>
</feature>
<feature type="compositionally biased region" description="Basic residues" evidence="2">
    <location>
        <begin position="14"/>
        <end position="23"/>
    </location>
</feature>
<comment type="function">
    <text evidence="1">Located on the platform of the 30S subunit, it bridges several disparate RNA helices of the 16S rRNA. Forms part of the Shine-Dalgarno cleft in the 70S ribosome.</text>
</comment>
<comment type="subunit">
    <text evidence="1">Part of the 30S ribosomal subunit. Interacts with proteins S7 and S18. Binds to IF-3.</text>
</comment>
<comment type="similarity">
    <text evidence="1">Belongs to the universal ribosomal protein uS11 family.</text>
</comment>
<dbReference type="EMBL" id="AL123456">
    <property type="protein sequence ID" value="CCP46281.1"/>
    <property type="molecule type" value="Genomic_DNA"/>
</dbReference>
<dbReference type="PIR" id="H70565">
    <property type="entry name" value="H70565"/>
</dbReference>
<dbReference type="RefSeq" id="NP_217976.1">
    <property type="nucleotide sequence ID" value="NC_000962.3"/>
</dbReference>
<dbReference type="RefSeq" id="WP_003900064.1">
    <property type="nucleotide sequence ID" value="NZ_NVQJ01000091.1"/>
</dbReference>
<dbReference type="PDB" id="5V93">
    <property type="method" value="EM"/>
    <property type="resolution" value="4.00 A"/>
    <property type="chains" value="k=1-139"/>
</dbReference>
<dbReference type="PDB" id="7KGB">
    <property type="method" value="EM"/>
    <property type="resolution" value="2.70 A"/>
    <property type="chains" value="k=1-139"/>
</dbReference>
<dbReference type="PDB" id="7MSC">
    <property type="method" value="EM"/>
    <property type="resolution" value="2.97 A"/>
    <property type="chains" value="k=1-139"/>
</dbReference>
<dbReference type="PDB" id="7MSH">
    <property type="method" value="EM"/>
    <property type="resolution" value="3.23 A"/>
    <property type="chains" value="k=1-139"/>
</dbReference>
<dbReference type="PDB" id="7MSM">
    <property type="method" value="EM"/>
    <property type="resolution" value="2.79 A"/>
    <property type="chains" value="k=1-139"/>
</dbReference>
<dbReference type="PDB" id="7MSZ">
    <property type="method" value="EM"/>
    <property type="resolution" value="3.10 A"/>
    <property type="chains" value="k=1-139"/>
</dbReference>
<dbReference type="PDB" id="7MT2">
    <property type="method" value="EM"/>
    <property type="resolution" value="2.76 A"/>
    <property type="chains" value="k=1-139"/>
</dbReference>
<dbReference type="PDB" id="7MT3">
    <property type="method" value="EM"/>
    <property type="resolution" value="2.80 A"/>
    <property type="chains" value="k=1-139"/>
</dbReference>
<dbReference type="PDB" id="7MT7">
    <property type="method" value="EM"/>
    <property type="resolution" value="2.71 A"/>
    <property type="chains" value="k=1-139"/>
</dbReference>
<dbReference type="PDB" id="7SFR">
    <property type="method" value="EM"/>
    <property type="resolution" value="2.60 A"/>
    <property type="chains" value="k=1-139"/>
</dbReference>
<dbReference type="PDBsum" id="5V93"/>
<dbReference type="PDBsum" id="7KGB"/>
<dbReference type="PDBsum" id="7MSC"/>
<dbReference type="PDBsum" id="7MSH"/>
<dbReference type="PDBsum" id="7MSM"/>
<dbReference type="PDBsum" id="7MSZ"/>
<dbReference type="PDBsum" id="7MT2"/>
<dbReference type="PDBsum" id="7MT3"/>
<dbReference type="PDBsum" id="7MT7"/>
<dbReference type="PDBsum" id="7SFR"/>
<dbReference type="EMDB" id="EMD-22865"/>
<dbReference type="EMDB" id="EMD-23961"/>
<dbReference type="EMDB" id="EMD-23962"/>
<dbReference type="EMDB" id="EMD-23969"/>
<dbReference type="EMDB" id="EMD-23972"/>
<dbReference type="EMDB" id="EMD-23974"/>
<dbReference type="EMDB" id="EMD-23975"/>
<dbReference type="EMDB" id="EMD-23976"/>
<dbReference type="EMDB" id="EMD-8645"/>
<dbReference type="SMR" id="P9WH65"/>
<dbReference type="FunCoup" id="P9WH65">
    <property type="interactions" value="436"/>
</dbReference>
<dbReference type="STRING" id="83332.Rv3459c"/>
<dbReference type="PaxDb" id="83332-Rv3459c"/>
<dbReference type="GeneID" id="45427448"/>
<dbReference type="GeneID" id="887524"/>
<dbReference type="KEGG" id="mtu:Rv3459c"/>
<dbReference type="KEGG" id="mtv:RVBD_3459c"/>
<dbReference type="TubercuList" id="Rv3459c"/>
<dbReference type="eggNOG" id="COG0100">
    <property type="taxonomic scope" value="Bacteria"/>
</dbReference>
<dbReference type="InParanoid" id="P9WH65"/>
<dbReference type="OrthoDB" id="9806415at2"/>
<dbReference type="PhylomeDB" id="P9WH65"/>
<dbReference type="PRO" id="PR:P9WH65"/>
<dbReference type="Proteomes" id="UP000001584">
    <property type="component" value="Chromosome"/>
</dbReference>
<dbReference type="GO" id="GO:0022627">
    <property type="term" value="C:cytosolic small ribosomal subunit"/>
    <property type="evidence" value="ECO:0000318"/>
    <property type="project" value="GO_Central"/>
</dbReference>
<dbReference type="GO" id="GO:0005886">
    <property type="term" value="C:plasma membrane"/>
    <property type="evidence" value="ECO:0007005"/>
    <property type="project" value="MTBBASE"/>
</dbReference>
<dbReference type="GO" id="GO:0019843">
    <property type="term" value="F:rRNA binding"/>
    <property type="evidence" value="ECO:0007669"/>
    <property type="project" value="UniProtKB-UniRule"/>
</dbReference>
<dbReference type="GO" id="GO:0003735">
    <property type="term" value="F:structural constituent of ribosome"/>
    <property type="evidence" value="ECO:0000318"/>
    <property type="project" value="GO_Central"/>
</dbReference>
<dbReference type="GO" id="GO:0006412">
    <property type="term" value="P:translation"/>
    <property type="evidence" value="ECO:0000318"/>
    <property type="project" value="GO_Central"/>
</dbReference>
<dbReference type="FunFam" id="3.30.420.80:FF:000001">
    <property type="entry name" value="30S ribosomal protein S11"/>
    <property type="match status" value="1"/>
</dbReference>
<dbReference type="Gene3D" id="3.30.420.80">
    <property type="entry name" value="Ribosomal protein S11"/>
    <property type="match status" value="1"/>
</dbReference>
<dbReference type="HAMAP" id="MF_01310">
    <property type="entry name" value="Ribosomal_uS11"/>
    <property type="match status" value="1"/>
</dbReference>
<dbReference type="InterPro" id="IPR001971">
    <property type="entry name" value="Ribosomal_uS11"/>
</dbReference>
<dbReference type="InterPro" id="IPR019981">
    <property type="entry name" value="Ribosomal_uS11_bac-type"/>
</dbReference>
<dbReference type="InterPro" id="IPR018102">
    <property type="entry name" value="Ribosomal_uS11_CS"/>
</dbReference>
<dbReference type="InterPro" id="IPR036967">
    <property type="entry name" value="Ribosomal_uS11_sf"/>
</dbReference>
<dbReference type="NCBIfam" id="NF003698">
    <property type="entry name" value="PRK05309.1"/>
    <property type="match status" value="1"/>
</dbReference>
<dbReference type="NCBIfam" id="TIGR03632">
    <property type="entry name" value="uS11_bact"/>
    <property type="match status" value="1"/>
</dbReference>
<dbReference type="PANTHER" id="PTHR11759">
    <property type="entry name" value="40S RIBOSOMAL PROTEIN S14/30S RIBOSOMAL PROTEIN S11"/>
    <property type="match status" value="1"/>
</dbReference>
<dbReference type="Pfam" id="PF00411">
    <property type="entry name" value="Ribosomal_S11"/>
    <property type="match status" value="1"/>
</dbReference>
<dbReference type="PIRSF" id="PIRSF002131">
    <property type="entry name" value="Ribosomal_S11"/>
    <property type="match status" value="1"/>
</dbReference>
<dbReference type="SUPFAM" id="SSF53137">
    <property type="entry name" value="Translational machinery components"/>
    <property type="match status" value="1"/>
</dbReference>
<dbReference type="PROSITE" id="PS00054">
    <property type="entry name" value="RIBOSOMAL_S11"/>
    <property type="match status" value="1"/>
</dbReference>
<name>RS11_MYCTU</name>
<gene>
    <name evidence="1" type="primary">rpsK</name>
    <name type="ordered locus">Rv3459c</name>
    <name type="ORF">MTCY13E12.12c</name>
</gene>
<reference key="1">
    <citation type="journal article" date="1998" name="Nature">
        <title>Deciphering the biology of Mycobacterium tuberculosis from the complete genome sequence.</title>
        <authorList>
            <person name="Cole S.T."/>
            <person name="Brosch R."/>
            <person name="Parkhill J."/>
            <person name="Garnier T."/>
            <person name="Churcher C.M."/>
            <person name="Harris D.E."/>
            <person name="Gordon S.V."/>
            <person name="Eiglmeier K."/>
            <person name="Gas S."/>
            <person name="Barry C.E. III"/>
            <person name="Tekaia F."/>
            <person name="Badcock K."/>
            <person name="Basham D."/>
            <person name="Brown D."/>
            <person name="Chillingworth T."/>
            <person name="Connor R."/>
            <person name="Davies R.M."/>
            <person name="Devlin K."/>
            <person name="Feltwell T."/>
            <person name="Gentles S."/>
            <person name="Hamlin N."/>
            <person name="Holroyd S."/>
            <person name="Hornsby T."/>
            <person name="Jagels K."/>
            <person name="Krogh A."/>
            <person name="McLean J."/>
            <person name="Moule S."/>
            <person name="Murphy L.D."/>
            <person name="Oliver S."/>
            <person name="Osborne J."/>
            <person name="Quail M.A."/>
            <person name="Rajandream M.A."/>
            <person name="Rogers J."/>
            <person name="Rutter S."/>
            <person name="Seeger K."/>
            <person name="Skelton S."/>
            <person name="Squares S."/>
            <person name="Squares R."/>
            <person name="Sulston J.E."/>
            <person name="Taylor K."/>
            <person name="Whitehead S."/>
            <person name="Barrell B.G."/>
        </authorList>
    </citation>
    <scope>NUCLEOTIDE SEQUENCE [LARGE SCALE GENOMIC DNA]</scope>
    <source>
        <strain>ATCC 25618 / H37Rv</strain>
    </source>
</reference>
<reference key="2">
    <citation type="journal article" date="2011" name="Mol. Cell. Proteomics">
        <title>Proteogenomic analysis of Mycobacterium tuberculosis by high resolution mass spectrometry.</title>
        <authorList>
            <person name="Kelkar D.S."/>
            <person name="Kumar D."/>
            <person name="Kumar P."/>
            <person name="Balakrishnan L."/>
            <person name="Muthusamy B."/>
            <person name="Yadav A.K."/>
            <person name="Shrivastava P."/>
            <person name="Marimuthu A."/>
            <person name="Anand S."/>
            <person name="Sundaram H."/>
            <person name="Kingsbury R."/>
            <person name="Harsha H.C."/>
            <person name="Nair B."/>
            <person name="Prasad T.S."/>
            <person name="Chauhan D.S."/>
            <person name="Katoch K."/>
            <person name="Katoch V.M."/>
            <person name="Kumar P."/>
            <person name="Chaerkady R."/>
            <person name="Ramachandran S."/>
            <person name="Dash D."/>
            <person name="Pandey A."/>
        </authorList>
    </citation>
    <scope>IDENTIFICATION BY MASS SPECTROMETRY [LARGE SCALE ANALYSIS]</scope>
    <source>
        <strain>ATCC 25618 / H37Rv</strain>
    </source>
</reference>
<keyword id="KW-0002">3D-structure</keyword>
<keyword id="KW-1185">Reference proteome</keyword>
<keyword id="KW-0687">Ribonucleoprotein</keyword>
<keyword id="KW-0689">Ribosomal protein</keyword>
<keyword id="KW-0694">RNA-binding</keyword>
<keyword id="KW-0699">rRNA-binding</keyword>
<accession>P9WH65</accession>
<accession>L0TFH0</accession>
<accession>O06326</accession>
<protein>
    <recommendedName>
        <fullName evidence="1">Small ribosomal subunit protein uS11</fullName>
    </recommendedName>
    <alternativeName>
        <fullName evidence="3">30S ribosomal protein S11</fullName>
    </alternativeName>
</protein>